<sequence length="367" mass="41392">MAFKLWLLDEETIYEHVFERYTQLEGQSGKLAQDLGIQDRRGGVLEITFEPSGLEGGRKKKRVRRRNKASSVEEDQNVAVDSYHVSVGQSISSLRSSRDNGNSTTGYVLWSTTPFFINWLLYSTSAAPFRLGSQVEVTCGSSCEGHKLELPRLVDLTGADRGKRGILELGAGISGILPVILGNFVDTYVSTDQKGILNKLKDNIMENLSQLTRKRCISRSLRLELPTVEPVGDADITAASLPSKSTLHLEVAALDWEKINLQDKKTHSLHPELSLIGETCSSVYVIAMDVIYNEYLIDPFLKTLKQLKHWLQTTYNLQFHVLVGIHLRSQEVTTLFLEKAIIEYDFTVYDIVDQVIQESRFNFYLIT</sequence>
<evidence type="ECO:0000250" key="1">
    <source>
        <dbReference type="UniProtKB" id="Q9H867"/>
    </source>
</evidence>
<evidence type="ECO:0000269" key="2">
    <source>
    </source>
</evidence>
<evidence type="ECO:0000269" key="3">
    <source>
    </source>
</evidence>
<evidence type="ECO:0000303" key="4">
    <source>
    </source>
</evidence>
<evidence type="ECO:0000305" key="5"/>
<evidence type="ECO:0000312" key="6">
    <source>
        <dbReference type="SGD" id="S000004127"/>
    </source>
</evidence>
<feature type="chain" id="PRO_0000262873" description="Ribosomal lysine N-methyltransferase 5">
    <location>
        <begin position="1"/>
        <end position="367"/>
    </location>
</feature>
<feature type="binding site" evidence="1">
    <location>
        <position position="110"/>
    </location>
    <ligand>
        <name>S-adenosyl-L-methionine</name>
        <dbReference type="ChEBI" id="CHEBI:59789"/>
    </ligand>
</feature>
<feature type="binding site" evidence="1">
    <location>
        <begin position="170"/>
        <end position="172"/>
    </location>
    <ligand>
        <name>S-adenosyl-L-methionine</name>
        <dbReference type="ChEBI" id="CHEBI:59789"/>
    </ligand>
</feature>
<feature type="binding site" evidence="1">
    <location>
        <position position="192"/>
    </location>
    <ligand>
        <name>S-adenosyl-L-methionine</name>
        <dbReference type="ChEBI" id="CHEBI:59789"/>
    </ligand>
</feature>
<feature type="binding site" evidence="1">
    <location>
        <position position="256"/>
    </location>
    <ligand>
        <name>S-adenosyl-L-methionine</name>
        <dbReference type="ChEBI" id="CHEBI:59789"/>
    </ligand>
</feature>
<feature type="binding site" evidence="1">
    <location>
        <position position="288"/>
    </location>
    <ligand>
        <name>S-adenosyl-L-methionine</name>
        <dbReference type="ChEBI" id="CHEBI:59789"/>
    </ligand>
</feature>
<organism>
    <name type="scientific">Saccharomyces cerevisiae (strain ATCC 204508 / S288c)</name>
    <name type="common">Baker's yeast</name>
    <dbReference type="NCBI Taxonomy" id="559292"/>
    <lineage>
        <taxon>Eukaryota</taxon>
        <taxon>Fungi</taxon>
        <taxon>Dikarya</taxon>
        <taxon>Ascomycota</taxon>
        <taxon>Saccharomycotina</taxon>
        <taxon>Saccharomycetes</taxon>
        <taxon>Saccharomycetales</taxon>
        <taxon>Saccharomycetaceae</taxon>
        <taxon>Saccharomyces</taxon>
    </lineage>
</organism>
<protein>
    <recommendedName>
        <fullName evidence="4">Ribosomal lysine N-methyltransferase 5</fullName>
        <ecNumber evidence="3">2.1.1.-</ecNumber>
    </recommendedName>
</protein>
<accession>Q12367</accession>
<accession>D6VYD2</accession>
<reference key="1">
    <citation type="journal article" date="1997" name="Nature">
        <title>The nucleotide sequence of Saccharomyces cerevisiae chromosome XII.</title>
        <authorList>
            <person name="Johnston M."/>
            <person name="Hillier L.W."/>
            <person name="Riles L."/>
            <person name="Albermann K."/>
            <person name="Andre B."/>
            <person name="Ansorge W."/>
            <person name="Benes V."/>
            <person name="Brueckner M."/>
            <person name="Delius H."/>
            <person name="Dubois E."/>
            <person name="Duesterhoeft A."/>
            <person name="Entian K.-D."/>
            <person name="Floeth M."/>
            <person name="Goffeau A."/>
            <person name="Hebling U."/>
            <person name="Heumann K."/>
            <person name="Heuss-Neitzel D."/>
            <person name="Hilbert H."/>
            <person name="Hilger F."/>
            <person name="Kleine K."/>
            <person name="Koetter P."/>
            <person name="Louis E.J."/>
            <person name="Messenguy F."/>
            <person name="Mewes H.-W."/>
            <person name="Miosga T."/>
            <person name="Moestl D."/>
            <person name="Mueller-Auer S."/>
            <person name="Nentwich U."/>
            <person name="Obermaier B."/>
            <person name="Piravandi E."/>
            <person name="Pohl T.M."/>
            <person name="Portetelle D."/>
            <person name="Purnelle B."/>
            <person name="Rechmann S."/>
            <person name="Rieger M."/>
            <person name="Rinke M."/>
            <person name="Rose M."/>
            <person name="Scharfe M."/>
            <person name="Scherens B."/>
            <person name="Scholler P."/>
            <person name="Schwager C."/>
            <person name="Schwarz S."/>
            <person name="Underwood A.P."/>
            <person name="Urrestarazu L.A."/>
            <person name="Vandenbol M."/>
            <person name="Verhasselt P."/>
            <person name="Vierendeels F."/>
            <person name="Voet M."/>
            <person name="Volckaert G."/>
            <person name="Voss H."/>
            <person name="Wambutt R."/>
            <person name="Wedler E."/>
            <person name="Wedler H."/>
            <person name="Zimmermann F.K."/>
            <person name="Zollner A."/>
            <person name="Hani J."/>
            <person name="Hoheisel J.D."/>
        </authorList>
    </citation>
    <scope>NUCLEOTIDE SEQUENCE [LARGE SCALE GENOMIC DNA]</scope>
    <source>
        <strain>ATCC 204508 / S288c</strain>
    </source>
</reference>
<reference key="2">
    <citation type="journal article" date="2014" name="G3 (Bethesda)">
        <title>The reference genome sequence of Saccharomyces cerevisiae: Then and now.</title>
        <authorList>
            <person name="Engel S.R."/>
            <person name="Dietrich F.S."/>
            <person name="Fisk D.G."/>
            <person name="Binkley G."/>
            <person name="Balakrishnan R."/>
            <person name="Costanzo M.C."/>
            <person name="Dwight S.S."/>
            <person name="Hitz B.C."/>
            <person name="Karra K."/>
            <person name="Nash R.S."/>
            <person name="Weng S."/>
            <person name="Wong E.D."/>
            <person name="Lloyd P."/>
            <person name="Skrzypek M.S."/>
            <person name="Miyasato S.R."/>
            <person name="Simison M."/>
            <person name="Cherry J.M."/>
        </authorList>
    </citation>
    <scope>GENOME REANNOTATION</scope>
    <source>
        <strain>ATCC 204508 / S288c</strain>
    </source>
</reference>
<reference key="3">
    <citation type="journal article" date="1999" name="J. Biol. Chem.">
        <title>S-adenosylmethionine-dependent methylation in Saccharomyces cerevisiae. Identification of a novel protein arginine methyltransferase.</title>
        <authorList>
            <person name="Niewmierzycka A."/>
            <person name="Clarke S."/>
        </authorList>
    </citation>
    <scope>PREDICTION OF FUNCTION</scope>
</reference>
<reference key="4">
    <citation type="journal article" date="2003" name="Nature">
        <title>Global analysis of protein expression in yeast.</title>
        <authorList>
            <person name="Ghaemmaghami S."/>
            <person name="Huh W.-K."/>
            <person name="Bower K."/>
            <person name="Howson R.W."/>
            <person name="Belle A."/>
            <person name="Dephoure N."/>
            <person name="O'Shea E.K."/>
            <person name="Weissman J.S."/>
        </authorList>
    </citation>
    <scope>LEVEL OF PROTEIN EXPRESSION [LARGE SCALE ANALYSIS]</scope>
</reference>
<reference key="5">
    <citation type="journal article" date="2009" name="Mol. Cell. Proteomics">
        <title>Multiple motif scanning to identify methyltransferases from the yeast proteome.</title>
        <authorList>
            <person name="Petrossian T.C."/>
            <person name="Clarke S.G."/>
        </authorList>
    </citation>
    <scope>PREDICTION OF FUNCTION</scope>
</reference>
<reference key="6">
    <citation type="journal article" date="2011" name="J. Biol. Chem.">
        <title>The ribosomal L1 protuberance in yeast is methylated on a lysine residue catalyzed by a seven beta-strand methyltransferase.</title>
        <authorList>
            <person name="Webb K.J."/>
            <person name="Al-Hadid Q."/>
            <person name="Zurita-Lopez C.I."/>
            <person name="Young B.D."/>
            <person name="Lipson R.S."/>
            <person name="Clarke S.G."/>
        </authorList>
    </citation>
    <scope>FUNCTION</scope>
</reference>
<gene>
    <name evidence="4" type="primary">RKM5</name>
    <name evidence="6" type="ordered locus">YLR137W</name>
    <name type="ORF">L3146</name>
</gene>
<proteinExistence type="evidence at protein level"/>
<comment type="function">
    <text evidence="3">S-adenosyl-L-methionine-dependent protein-lysine N-methyltransferase that monomethylates 60S ribosomal protein L1 (RPL1A and RPL1B) at 'Lys-46'.</text>
</comment>
<comment type="miscellaneous">
    <text evidence="2">Present with 468 molecules/cell in log phase SD medium.</text>
</comment>
<comment type="similarity">
    <text evidence="5">Belongs to the class I-like SAM-binding methyltransferase superfamily. RKM5 family.</text>
</comment>
<keyword id="KW-0489">Methyltransferase</keyword>
<keyword id="KW-1185">Reference proteome</keyword>
<keyword id="KW-0949">S-adenosyl-L-methionine</keyword>
<keyword id="KW-0808">Transferase</keyword>
<name>RKM5_YEAST</name>
<dbReference type="EC" id="2.1.1.-" evidence="3"/>
<dbReference type="EMBL" id="U53881">
    <property type="protein sequence ID" value="AAB82393.1"/>
    <property type="molecule type" value="Genomic_DNA"/>
</dbReference>
<dbReference type="EMBL" id="X91258">
    <property type="protein sequence ID" value="CAA62652.1"/>
    <property type="molecule type" value="Genomic_DNA"/>
</dbReference>
<dbReference type="EMBL" id="Z73309">
    <property type="protein sequence ID" value="CAA97708.1"/>
    <property type="molecule type" value="Genomic_DNA"/>
</dbReference>
<dbReference type="EMBL" id="BK006945">
    <property type="protein sequence ID" value="DAA09448.1"/>
    <property type="molecule type" value="Genomic_DNA"/>
</dbReference>
<dbReference type="PIR" id="S59329">
    <property type="entry name" value="S59329"/>
</dbReference>
<dbReference type="RefSeq" id="NP_013238.1">
    <property type="nucleotide sequence ID" value="NM_001182024.1"/>
</dbReference>
<dbReference type="BioGRID" id="31406">
    <property type="interactions" value="38"/>
</dbReference>
<dbReference type="DIP" id="DIP-4967N"/>
<dbReference type="FunCoup" id="Q12367">
    <property type="interactions" value="29"/>
</dbReference>
<dbReference type="IntAct" id="Q12367">
    <property type="interactions" value="1"/>
</dbReference>
<dbReference type="STRING" id="4932.YLR137W"/>
<dbReference type="iPTMnet" id="Q12367"/>
<dbReference type="PaxDb" id="4932-YLR137W"/>
<dbReference type="PeptideAtlas" id="Q12367"/>
<dbReference type="PRIDE" id="Q12367"/>
<dbReference type="EnsemblFungi" id="YLR137W_mRNA">
    <property type="protein sequence ID" value="YLR137W"/>
    <property type="gene ID" value="YLR137W"/>
</dbReference>
<dbReference type="GeneID" id="850828"/>
<dbReference type="KEGG" id="sce:YLR137W"/>
<dbReference type="AGR" id="SGD:S000004127"/>
<dbReference type="SGD" id="S000004127">
    <property type="gene designation" value="RKM5"/>
</dbReference>
<dbReference type="VEuPathDB" id="FungiDB:YLR137W"/>
<dbReference type="eggNOG" id="KOG1018">
    <property type="taxonomic scope" value="Eukaryota"/>
</dbReference>
<dbReference type="HOGENOM" id="CLU_051532_0_0_1"/>
<dbReference type="InParanoid" id="Q12367"/>
<dbReference type="OMA" id="ACDTIYN"/>
<dbReference type="OrthoDB" id="2529286at2759"/>
<dbReference type="BioCyc" id="YEAST:G3O-32277-MONOMER"/>
<dbReference type="BioGRID-ORCS" id="850828">
    <property type="hits" value="0 hits in 10 CRISPR screens"/>
</dbReference>
<dbReference type="PRO" id="PR:Q12367"/>
<dbReference type="Proteomes" id="UP000002311">
    <property type="component" value="Chromosome XII"/>
</dbReference>
<dbReference type="RNAct" id="Q12367">
    <property type="molecule type" value="protein"/>
</dbReference>
<dbReference type="GO" id="GO:0005829">
    <property type="term" value="C:cytosol"/>
    <property type="evidence" value="ECO:0000318"/>
    <property type="project" value="GO_Central"/>
</dbReference>
<dbReference type="GO" id="GO:0032991">
    <property type="term" value="C:protein-containing complex"/>
    <property type="evidence" value="ECO:0000318"/>
    <property type="project" value="GO_Central"/>
</dbReference>
<dbReference type="GO" id="GO:0008276">
    <property type="term" value="F:protein methyltransferase activity"/>
    <property type="evidence" value="ECO:0000318"/>
    <property type="project" value="GO_Central"/>
</dbReference>
<dbReference type="GO" id="GO:0008757">
    <property type="term" value="F:S-adenosylmethionine-dependent methyltransferase activity"/>
    <property type="evidence" value="ECO:0000314"/>
    <property type="project" value="SGD"/>
</dbReference>
<dbReference type="GO" id="GO:0032259">
    <property type="term" value="P:methylation"/>
    <property type="evidence" value="ECO:0007669"/>
    <property type="project" value="UniProtKB-KW"/>
</dbReference>
<dbReference type="Gene3D" id="3.40.50.150">
    <property type="entry name" value="Vaccinia Virus protein VP39"/>
    <property type="match status" value="1"/>
</dbReference>
<dbReference type="InterPro" id="IPR019410">
    <property type="entry name" value="Methyltransf_16"/>
</dbReference>
<dbReference type="InterPro" id="IPR029063">
    <property type="entry name" value="SAM-dependent_MTases_sf"/>
</dbReference>
<dbReference type="PANTHER" id="PTHR14614">
    <property type="entry name" value="HEPATOCELLULAR CARCINOMA-ASSOCIATED ANTIGEN"/>
    <property type="match status" value="1"/>
</dbReference>
<dbReference type="PANTHER" id="PTHR14614:SF109">
    <property type="entry name" value="RIBOSOMAL LYSINE N-METHYLTRANSFERASE 5"/>
    <property type="match status" value="1"/>
</dbReference>